<reference key="1">
    <citation type="journal article" date="2007" name="Photosyn. Res.">
        <title>Complete nucleotide sequence of the freshwater unicellular cyanobacterium Synechococcus elongatus PCC 6301 chromosome: gene content and organization.</title>
        <authorList>
            <person name="Sugita C."/>
            <person name="Ogata K."/>
            <person name="Shikata M."/>
            <person name="Jikuya H."/>
            <person name="Takano J."/>
            <person name="Furumichi M."/>
            <person name="Kanehisa M."/>
            <person name="Omata T."/>
            <person name="Sugiura M."/>
            <person name="Sugita M."/>
        </authorList>
    </citation>
    <scope>NUCLEOTIDE SEQUENCE [LARGE SCALE GENOMIC DNA]</scope>
    <source>
        <strain>ATCC 27144 / PCC 6301 / SAUG 1402/1</strain>
    </source>
</reference>
<keyword id="KW-0963">Cytoplasm</keyword>
<keyword id="KW-0378">Hydrolase</keyword>
<keyword id="KW-0546">Nucleotide metabolism</keyword>
<organism>
    <name type="scientific">Synechococcus sp. (strain ATCC 27144 / PCC 6301 / SAUG 1402/1)</name>
    <name type="common">Anacystis nidulans</name>
    <dbReference type="NCBI Taxonomy" id="269084"/>
    <lineage>
        <taxon>Bacteria</taxon>
        <taxon>Bacillati</taxon>
        <taxon>Cyanobacteriota</taxon>
        <taxon>Cyanophyceae</taxon>
        <taxon>Synechococcales</taxon>
        <taxon>Synechococcaceae</taxon>
        <taxon>Synechococcus</taxon>
    </lineage>
</organism>
<dbReference type="EC" id="3.6.1.9" evidence="1"/>
<dbReference type="EMBL" id="AP008231">
    <property type="protein sequence ID" value="BAD79493.1"/>
    <property type="status" value="ALT_INIT"/>
    <property type="molecule type" value="Genomic_DNA"/>
</dbReference>
<dbReference type="SMR" id="Q5N2H7"/>
<dbReference type="KEGG" id="syc:syc1303_d"/>
<dbReference type="eggNOG" id="COG0424">
    <property type="taxonomic scope" value="Bacteria"/>
</dbReference>
<dbReference type="Proteomes" id="UP000001175">
    <property type="component" value="Chromosome"/>
</dbReference>
<dbReference type="GO" id="GO:0005737">
    <property type="term" value="C:cytoplasm"/>
    <property type="evidence" value="ECO:0007669"/>
    <property type="project" value="UniProtKB-SubCell"/>
</dbReference>
<dbReference type="GO" id="GO:0047429">
    <property type="term" value="F:nucleoside triphosphate diphosphatase activity"/>
    <property type="evidence" value="ECO:0007669"/>
    <property type="project" value="UniProtKB-EC"/>
</dbReference>
<dbReference type="GO" id="GO:0009117">
    <property type="term" value="P:nucleotide metabolic process"/>
    <property type="evidence" value="ECO:0007669"/>
    <property type="project" value="UniProtKB-KW"/>
</dbReference>
<dbReference type="CDD" id="cd00555">
    <property type="entry name" value="Maf"/>
    <property type="match status" value="1"/>
</dbReference>
<dbReference type="Gene3D" id="3.90.950.10">
    <property type="match status" value="1"/>
</dbReference>
<dbReference type="HAMAP" id="MF_00528">
    <property type="entry name" value="Maf"/>
    <property type="match status" value="1"/>
</dbReference>
<dbReference type="InterPro" id="IPR029001">
    <property type="entry name" value="ITPase-like_fam"/>
</dbReference>
<dbReference type="InterPro" id="IPR003697">
    <property type="entry name" value="Maf-like"/>
</dbReference>
<dbReference type="NCBIfam" id="TIGR00172">
    <property type="entry name" value="maf"/>
    <property type="match status" value="1"/>
</dbReference>
<dbReference type="PANTHER" id="PTHR43213">
    <property type="entry name" value="BIFUNCTIONAL DTTP/UTP PYROPHOSPHATASE/METHYLTRANSFERASE PROTEIN-RELATED"/>
    <property type="match status" value="1"/>
</dbReference>
<dbReference type="PANTHER" id="PTHR43213:SF5">
    <property type="entry name" value="BIFUNCTIONAL DTTP_UTP PYROPHOSPHATASE_METHYLTRANSFERASE PROTEIN-RELATED"/>
    <property type="match status" value="1"/>
</dbReference>
<dbReference type="Pfam" id="PF02545">
    <property type="entry name" value="Maf"/>
    <property type="match status" value="1"/>
</dbReference>
<dbReference type="PIRSF" id="PIRSF006305">
    <property type="entry name" value="Maf"/>
    <property type="match status" value="1"/>
</dbReference>
<dbReference type="SUPFAM" id="SSF52972">
    <property type="entry name" value="ITPase-like"/>
    <property type="match status" value="1"/>
</dbReference>
<proteinExistence type="inferred from homology"/>
<sequence>MTTPRLILASASPARRRLLATVGLTVEVQPSHFDESLVQLNDPPALVQELAFRKAASVARSQTEPALVLGCDSVLAINGEICGKPASPAEAIARWQQMRGQWGELHTGHALIDSASQRRWLACGTTRVRFAEVEDAEIKAYVATGEPLACAGAFALEGKGGLFIAEIQGCHTNVIGLSLPLLRELLLAADYPLLQAWQT</sequence>
<gene>
    <name type="ordered locus">syc1303_d</name>
</gene>
<comment type="function">
    <text evidence="1">Nucleoside triphosphate pyrophosphatase. May have a dual role in cell division arrest and in preventing the incorporation of modified nucleotides into cellular nucleic acids.</text>
</comment>
<comment type="catalytic activity">
    <reaction evidence="1">
        <text>a ribonucleoside 5'-triphosphate + H2O = a ribonucleoside 5'-phosphate + diphosphate + H(+)</text>
        <dbReference type="Rhea" id="RHEA:23996"/>
        <dbReference type="ChEBI" id="CHEBI:15377"/>
        <dbReference type="ChEBI" id="CHEBI:15378"/>
        <dbReference type="ChEBI" id="CHEBI:33019"/>
        <dbReference type="ChEBI" id="CHEBI:58043"/>
        <dbReference type="ChEBI" id="CHEBI:61557"/>
        <dbReference type="EC" id="3.6.1.9"/>
    </reaction>
</comment>
<comment type="catalytic activity">
    <reaction evidence="1">
        <text>a 2'-deoxyribonucleoside 5'-triphosphate + H2O = a 2'-deoxyribonucleoside 5'-phosphate + diphosphate + H(+)</text>
        <dbReference type="Rhea" id="RHEA:44644"/>
        <dbReference type="ChEBI" id="CHEBI:15377"/>
        <dbReference type="ChEBI" id="CHEBI:15378"/>
        <dbReference type="ChEBI" id="CHEBI:33019"/>
        <dbReference type="ChEBI" id="CHEBI:61560"/>
        <dbReference type="ChEBI" id="CHEBI:65317"/>
        <dbReference type="EC" id="3.6.1.9"/>
    </reaction>
</comment>
<comment type="cofactor">
    <cofactor evidence="1">
        <name>a divalent metal cation</name>
        <dbReference type="ChEBI" id="CHEBI:60240"/>
    </cofactor>
</comment>
<comment type="subcellular location">
    <subcellularLocation>
        <location evidence="1">Cytoplasm</location>
    </subcellularLocation>
</comment>
<comment type="similarity">
    <text evidence="1">Belongs to the Maf family.</text>
</comment>
<comment type="sequence caution" evidence="2">
    <conflict type="erroneous initiation">
        <sequence resource="EMBL-CDS" id="BAD79493"/>
    </conflict>
</comment>
<name>NTPP_SYNP6</name>
<evidence type="ECO:0000255" key="1">
    <source>
        <dbReference type="HAMAP-Rule" id="MF_00528"/>
    </source>
</evidence>
<evidence type="ECO:0000305" key="2"/>
<feature type="chain" id="PRO_0000267444" description="Nucleoside triphosphate pyrophosphatase">
    <location>
        <begin position="1"/>
        <end position="199"/>
    </location>
</feature>
<feature type="active site" description="Proton acceptor" evidence="1">
    <location>
        <position position="72"/>
    </location>
</feature>
<protein>
    <recommendedName>
        <fullName evidence="1">Nucleoside triphosphate pyrophosphatase</fullName>
        <ecNumber evidence="1">3.6.1.9</ecNumber>
    </recommendedName>
    <alternativeName>
        <fullName evidence="1">Nucleotide pyrophosphatase</fullName>
        <shortName evidence="1">Nucleotide PPase</shortName>
    </alternativeName>
</protein>
<accession>Q5N2H7</accession>